<reference key="1">
    <citation type="journal article" date="1989" name="Differentiation">
        <title>Nucleotide sequences and expression of cDNA clones for boar and bull transition protein 1 and its evolutionary conservation in mammals.</title>
        <authorList>
            <person name="Kremling H."/>
            <person name="Luerssen H."/>
            <person name="Abham I.M."/>
            <person name="Klemm U."/>
            <person name="Tsaousidou S."/>
            <person name="Engel W."/>
        </authorList>
    </citation>
    <scope>NUCLEOTIDE SEQUENCE [MRNA]</scope>
    <source>
        <tissue>Testis</tissue>
    </source>
</reference>
<reference key="2">
    <citation type="journal article" date="1992" name="DNA Seq.">
        <title>Nucleotide sequence and exon-intron structure of the bovine transition protein 1 gene.</title>
        <authorList>
            <person name="Kim Y."/>
            <person name="Kremling H."/>
            <person name="Tessmann D."/>
            <person name="Engel W."/>
        </authorList>
    </citation>
    <scope>NUCLEOTIDE SEQUENCE [GENOMIC DNA]</scope>
</reference>
<reference key="3">
    <citation type="submission" date="2005-08" db="EMBL/GenBank/DDBJ databases">
        <authorList>
            <consortium name="NIH - Mammalian Gene Collection (MGC) project"/>
        </authorList>
    </citation>
    <scope>NUCLEOTIDE SEQUENCE [LARGE SCALE MRNA]</scope>
    <source>
        <strain>Crossbred X Angus</strain>
        <tissue>Liver</tissue>
    </source>
</reference>
<proteinExistence type="evidence at transcript level"/>
<feature type="chain" id="PRO_0000191416" description="Spermatid nuclear transition protein 1">
    <location>
        <begin position="1"/>
        <end position="55"/>
    </location>
</feature>
<feature type="region of interest" description="Disordered" evidence="3">
    <location>
        <begin position="1"/>
        <end position="55"/>
    </location>
</feature>
<feature type="compositionally biased region" description="Basic residues" evidence="3">
    <location>
        <begin position="1"/>
        <end position="42"/>
    </location>
</feature>
<feature type="modified residue" description="Phosphoserine" evidence="2">
    <location>
        <position position="9"/>
    </location>
</feature>
<feature type="modified residue" description="Phosphoserine" evidence="2">
    <location>
        <position position="36"/>
    </location>
</feature>
<feature type="modified residue" description="Phosphoserine" evidence="2">
    <location>
        <position position="37"/>
    </location>
</feature>
<feature type="modified residue" description="Phosphoserine" evidence="2">
    <location>
        <position position="40"/>
    </location>
</feature>
<name>STP1_BOVIN</name>
<gene>
    <name type="primary">TNP1</name>
</gene>
<keyword id="KW-0158">Chromosome</keyword>
<keyword id="KW-0217">Developmental protein</keyword>
<keyword id="KW-0221">Differentiation</keyword>
<keyword id="KW-0238">DNA-binding</keyword>
<keyword id="KW-0544">Nucleosome core</keyword>
<keyword id="KW-0539">Nucleus</keyword>
<keyword id="KW-0597">Phosphoprotein</keyword>
<keyword id="KW-1185">Reference proteome</keyword>
<keyword id="KW-0744">Spermatogenesis</keyword>
<accession>P17305</accession>
<accession>Q3T027</accession>
<evidence type="ECO:0000250" key="1">
    <source>
        <dbReference type="UniProtKB" id="P10856"/>
    </source>
</evidence>
<evidence type="ECO:0000250" key="2">
    <source>
        <dbReference type="UniProtKB" id="P22613"/>
    </source>
</evidence>
<evidence type="ECO:0000256" key="3">
    <source>
        <dbReference type="SAM" id="MobiDB-lite"/>
    </source>
</evidence>
<evidence type="ECO:0000305" key="4"/>
<protein>
    <recommendedName>
        <fullName>Spermatid nuclear transition protein 1</fullName>
        <shortName>STP-1</shortName>
        <shortName>TP-1</shortName>
    </recommendedName>
</protein>
<organism>
    <name type="scientific">Bos taurus</name>
    <name type="common">Bovine</name>
    <dbReference type="NCBI Taxonomy" id="9913"/>
    <lineage>
        <taxon>Eukaryota</taxon>
        <taxon>Metazoa</taxon>
        <taxon>Chordata</taxon>
        <taxon>Craniata</taxon>
        <taxon>Vertebrata</taxon>
        <taxon>Euteleostomi</taxon>
        <taxon>Mammalia</taxon>
        <taxon>Eutheria</taxon>
        <taxon>Laurasiatheria</taxon>
        <taxon>Artiodactyla</taxon>
        <taxon>Ruminantia</taxon>
        <taxon>Pecora</taxon>
        <taxon>Bovidae</taxon>
        <taxon>Bovinae</taxon>
        <taxon>Bos</taxon>
    </lineage>
</organism>
<comment type="function">
    <text evidence="1">Plays a key role in the replacement of histones to protamine in the elongating spermatids of mammals. In condensing spermatids, loaded onto the nucleosomes, where it promotes the recruitment and processing of protamines, which are responsible for histone eviction.</text>
</comment>
<comment type="subcellular location">
    <subcellularLocation>
        <location evidence="1">Nucleus</location>
    </subcellularLocation>
    <subcellularLocation>
        <location evidence="1">Chromosome</location>
    </subcellularLocation>
    <text evidence="1">Loaded onto the nucleosomes of condensing spermatids.</text>
</comment>
<comment type="tissue specificity">
    <text>Testis.</text>
</comment>
<comment type="similarity">
    <text evidence="4">Belongs to the nuclear transition protein 1 family.</text>
</comment>
<sequence>MSTSRKLKSQGMRRGKNRTPHKGVKRSGSKRKYRKSSLKSRKRCDDANRNLRSHL</sequence>
<dbReference type="EMBL" id="X16171">
    <property type="protein sequence ID" value="CAA34293.1"/>
    <property type="molecule type" value="mRNA"/>
</dbReference>
<dbReference type="EMBL" id="X65041">
    <property type="protein sequence ID" value="CAA46175.1"/>
    <property type="molecule type" value="Genomic_DNA"/>
</dbReference>
<dbReference type="EMBL" id="BC102598">
    <property type="protein sequence ID" value="AAI02599.1"/>
    <property type="molecule type" value="mRNA"/>
</dbReference>
<dbReference type="PIR" id="A56647">
    <property type="entry name" value="BGBO"/>
</dbReference>
<dbReference type="RefSeq" id="NP_776624.1">
    <property type="nucleotide sequence ID" value="NM_174199.2"/>
</dbReference>
<dbReference type="FunCoup" id="P17305">
    <property type="interactions" value="20"/>
</dbReference>
<dbReference type="STRING" id="9913.ENSBTAP00000025292"/>
<dbReference type="PaxDb" id="9913-ENSBTAP00000025292"/>
<dbReference type="Ensembl" id="ENSBTAT00000025292.4">
    <property type="protein sequence ID" value="ENSBTAP00000025292.3"/>
    <property type="gene ID" value="ENSBTAG00000019003.4"/>
</dbReference>
<dbReference type="GeneID" id="281537"/>
<dbReference type="KEGG" id="bta:281537"/>
<dbReference type="CTD" id="7141"/>
<dbReference type="VEuPathDB" id="HostDB:ENSBTAG00000019003"/>
<dbReference type="VGNC" id="VGNC:36197">
    <property type="gene designation" value="TNP1"/>
</dbReference>
<dbReference type="eggNOG" id="ENOG502TKT1">
    <property type="taxonomic scope" value="Eukaryota"/>
</dbReference>
<dbReference type="GeneTree" id="ENSGT00390000000539"/>
<dbReference type="HOGENOM" id="CLU_3019482_0_0_1"/>
<dbReference type="InParanoid" id="P17305"/>
<dbReference type="OMA" id="FKSHGMR"/>
<dbReference type="TreeFam" id="TF338391"/>
<dbReference type="Proteomes" id="UP000009136">
    <property type="component" value="Chromosome 2"/>
</dbReference>
<dbReference type="Bgee" id="ENSBTAG00000019003">
    <property type="expression patterns" value="Expressed in semen and 21 other cell types or tissues"/>
</dbReference>
<dbReference type="GO" id="GO:0001673">
    <property type="term" value="C:male germ cell nucleus"/>
    <property type="evidence" value="ECO:0000318"/>
    <property type="project" value="GO_Central"/>
</dbReference>
<dbReference type="GO" id="GO:0000786">
    <property type="term" value="C:nucleosome"/>
    <property type="evidence" value="ECO:0000250"/>
    <property type="project" value="UniProtKB"/>
</dbReference>
<dbReference type="GO" id="GO:0005634">
    <property type="term" value="C:nucleus"/>
    <property type="evidence" value="ECO:0000250"/>
    <property type="project" value="UniProtKB"/>
</dbReference>
<dbReference type="GO" id="GO:0003677">
    <property type="term" value="F:DNA binding"/>
    <property type="evidence" value="ECO:0000250"/>
    <property type="project" value="UniProtKB"/>
</dbReference>
<dbReference type="GO" id="GO:0006338">
    <property type="term" value="P:chromatin remodeling"/>
    <property type="evidence" value="ECO:0000250"/>
    <property type="project" value="UniProtKB"/>
</dbReference>
<dbReference type="GO" id="GO:0030317">
    <property type="term" value="P:flagellated sperm motility"/>
    <property type="evidence" value="ECO:0000250"/>
    <property type="project" value="UniProtKB"/>
</dbReference>
<dbReference type="GO" id="GO:0031507">
    <property type="term" value="P:heterochromatin formation"/>
    <property type="evidence" value="ECO:0000250"/>
    <property type="project" value="UniProtKB"/>
</dbReference>
<dbReference type="GO" id="GO:0045892">
    <property type="term" value="P:negative regulation of DNA-templated transcription"/>
    <property type="evidence" value="ECO:0000250"/>
    <property type="project" value="UniProtKB"/>
</dbReference>
<dbReference type="GO" id="GO:0006337">
    <property type="term" value="P:nucleosome disassembly"/>
    <property type="evidence" value="ECO:0000250"/>
    <property type="project" value="UniProtKB"/>
</dbReference>
<dbReference type="GO" id="GO:0010954">
    <property type="term" value="P:positive regulation of protein processing"/>
    <property type="evidence" value="ECO:0000250"/>
    <property type="project" value="UniProtKB"/>
</dbReference>
<dbReference type="GO" id="GO:0019953">
    <property type="term" value="P:sexual reproduction"/>
    <property type="evidence" value="ECO:0000250"/>
    <property type="project" value="UniProtKB"/>
</dbReference>
<dbReference type="GO" id="GO:0000012">
    <property type="term" value="P:single strand break repair"/>
    <property type="evidence" value="ECO:0000250"/>
    <property type="project" value="UniProtKB"/>
</dbReference>
<dbReference type="GO" id="GO:0035092">
    <property type="term" value="P:sperm DNA condensation"/>
    <property type="evidence" value="ECO:0000250"/>
    <property type="project" value="UniProtKB"/>
</dbReference>
<dbReference type="GO" id="GO:0007286">
    <property type="term" value="P:spermatid development"/>
    <property type="evidence" value="ECO:0000250"/>
    <property type="project" value="UniProtKB"/>
</dbReference>
<dbReference type="GO" id="GO:0007290">
    <property type="term" value="P:spermatid nucleus elongation"/>
    <property type="evidence" value="ECO:0000250"/>
    <property type="project" value="UniProtKB"/>
</dbReference>
<dbReference type="InterPro" id="IPR001319">
    <property type="entry name" value="Nuclear_transition_prot1"/>
</dbReference>
<dbReference type="InterPro" id="IPR020062">
    <property type="entry name" value="Nuclear_transition_prot1_CS"/>
</dbReference>
<dbReference type="PANTHER" id="PTHR17486">
    <property type="entry name" value="SPERMATID NUCLEAR TRANSITION PROTEIN 1"/>
    <property type="match status" value="1"/>
</dbReference>
<dbReference type="PANTHER" id="PTHR17486:SF0">
    <property type="entry name" value="SPERMATID NUCLEAR TRANSITION PROTEIN 1"/>
    <property type="match status" value="1"/>
</dbReference>
<dbReference type="Pfam" id="PF02079">
    <property type="entry name" value="TP1"/>
    <property type="match status" value="1"/>
</dbReference>
<dbReference type="PROSITE" id="PS00541">
    <property type="entry name" value="TP1"/>
    <property type="match status" value="1"/>
</dbReference>